<reference key="1">
    <citation type="submission" date="2006-12" db="EMBL/GenBank/DDBJ databases">
        <title>Complete sequence of Halorhodospira halophila SL1.</title>
        <authorList>
            <consortium name="US DOE Joint Genome Institute"/>
            <person name="Copeland A."/>
            <person name="Lucas S."/>
            <person name="Lapidus A."/>
            <person name="Barry K."/>
            <person name="Detter J.C."/>
            <person name="Glavina del Rio T."/>
            <person name="Hammon N."/>
            <person name="Israni S."/>
            <person name="Dalin E."/>
            <person name="Tice H."/>
            <person name="Pitluck S."/>
            <person name="Saunders E."/>
            <person name="Brettin T."/>
            <person name="Bruce D."/>
            <person name="Han C."/>
            <person name="Tapia R."/>
            <person name="Schmutz J."/>
            <person name="Larimer F."/>
            <person name="Land M."/>
            <person name="Hauser L."/>
            <person name="Kyrpides N."/>
            <person name="Mikhailova N."/>
            <person name="Hoff W."/>
            <person name="Richardson P."/>
        </authorList>
    </citation>
    <scope>NUCLEOTIDE SEQUENCE [LARGE SCALE GENOMIC DNA]</scope>
    <source>
        <strain>DSM 244 / SL1</strain>
    </source>
</reference>
<sequence length="289" mass="32148">MAGAKEVKTKIKSVQNTQKITSAMEMVAASKMRRAQERMEATRPYAEKIRQVIGHLGHANPDYRHPFLVERDEVKRVGYIVVSTDRGLCGGLNVNLFKAAINDLKGWQEQGVGAQVVPIGAKGIGFFERTGVEIPAEVRDIGDRPKLEQMIGPIKVLLDAYVDGTIDRVNLVSNQFVNTMTQRPQVQRLIPVEPVREEEMLENWDYIYEPDAASLLDDVLRRYVESQVYQGVVENIACEMAARMIAMKSASDNAAEIIDDLQITYNKARQAAITQELTEIVSGAEAVSG</sequence>
<feature type="chain" id="PRO_1000053225" description="ATP synthase gamma chain">
    <location>
        <begin position="1"/>
        <end position="289"/>
    </location>
</feature>
<protein>
    <recommendedName>
        <fullName evidence="1">ATP synthase gamma chain</fullName>
    </recommendedName>
    <alternativeName>
        <fullName evidence="1">ATP synthase F1 sector gamma subunit</fullName>
    </alternativeName>
    <alternativeName>
        <fullName evidence="1">F-ATPase gamma subunit</fullName>
    </alternativeName>
</protein>
<keyword id="KW-0066">ATP synthesis</keyword>
<keyword id="KW-0997">Cell inner membrane</keyword>
<keyword id="KW-1003">Cell membrane</keyword>
<keyword id="KW-0139">CF(1)</keyword>
<keyword id="KW-0375">Hydrogen ion transport</keyword>
<keyword id="KW-0406">Ion transport</keyword>
<keyword id="KW-0472">Membrane</keyword>
<keyword id="KW-1185">Reference proteome</keyword>
<keyword id="KW-0813">Transport</keyword>
<accession>A1WZT2</accession>
<comment type="function">
    <text evidence="1">Produces ATP from ADP in the presence of a proton gradient across the membrane. The gamma chain is believed to be important in regulating ATPase activity and the flow of protons through the CF(0) complex.</text>
</comment>
<comment type="subunit">
    <text evidence="1">F-type ATPases have 2 components, CF(1) - the catalytic core - and CF(0) - the membrane proton channel. CF(1) has five subunits: alpha(3), beta(3), gamma(1), delta(1), epsilon(1). CF(0) has three main subunits: a, b and c.</text>
</comment>
<comment type="subcellular location">
    <subcellularLocation>
        <location evidence="1">Cell inner membrane</location>
        <topology evidence="1">Peripheral membrane protein</topology>
    </subcellularLocation>
</comment>
<comment type="similarity">
    <text evidence="1">Belongs to the ATPase gamma chain family.</text>
</comment>
<name>ATPG_HALHL</name>
<gene>
    <name evidence="1" type="primary">atpG</name>
    <name type="ordered locus">Hhal_2431</name>
</gene>
<dbReference type="EMBL" id="CP000544">
    <property type="protein sequence ID" value="ABM63194.1"/>
    <property type="molecule type" value="Genomic_DNA"/>
</dbReference>
<dbReference type="RefSeq" id="WP_011815216.1">
    <property type="nucleotide sequence ID" value="NC_008789.1"/>
</dbReference>
<dbReference type="SMR" id="A1WZT2"/>
<dbReference type="STRING" id="349124.Hhal_2431"/>
<dbReference type="KEGG" id="hha:Hhal_2431"/>
<dbReference type="eggNOG" id="COG0224">
    <property type="taxonomic scope" value="Bacteria"/>
</dbReference>
<dbReference type="HOGENOM" id="CLU_050669_0_1_6"/>
<dbReference type="OrthoDB" id="9812769at2"/>
<dbReference type="Proteomes" id="UP000000647">
    <property type="component" value="Chromosome"/>
</dbReference>
<dbReference type="GO" id="GO:0005886">
    <property type="term" value="C:plasma membrane"/>
    <property type="evidence" value="ECO:0007669"/>
    <property type="project" value="UniProtKB-SubCell"/>
</dbReference>
<dbReference type="GO" id="GO:0045259">
    <property type="term" value="C:proton-transporting ATP synthase complex"/>
    <property type="evidence" value="ECO:0007669"/>
    <property type="project" value="UniProtKB-KW"/>
</dbReference>
<dbReference type="GO" id="GO:0005524">
    <property type="term" value="F:ATP binding"/>
    <property type="evidence" value="ECO:0007669"/>
    <property type="project" value="UniProtKB-UniRule"/>
</dbReference>
<dbReference type="GO" id="GO:0046933">
    <property type="term" value="F:proton-transporting ATP synthase activity, rotational mechanism"/>
    <property type="evidence" value="ECO:0007669"/>
    <property type="project" value="UniProtKB-UniRule"/>
</dbReference>
<dbReference type="GO" id="GO:0042777">
    <property type="term" value="P:proton motive force-driven plasma membrane ATP synthesis"/>
    <property type="evidence" value="ECO:0007669"/>
    <property type="project" value="UniProtKB-UniRule"/>
</dbReference>
<dbReference type="CDD" id="cd12151">
    <property type="entry name" value="F1-ATPase_gamma"/>
    <property type="match status" value="1"/>
</dbReference>
<dbReference type="FunFam" id="1.10.287.80:FF:000005">
    <property type="entry name" value="ATP synthase gamma chain"/>
    <property type="match status" value="2"/>
</dbReference>
<dbReference type="Gene3D" id="3.40.1380.10">
    <property type="match status" value="1"/>
</dbReference>
<dbReference type="Gene3D" id="1.10.287.80">
    <property type="entry name" value="ATP synthase, gamma subunit, helix hairpin domain"/>
    <property type="match status" value="1"/>
</dbReference>
<dbReference type="HAMAP" id="MF_00815">
    <property type="entry name" value="ATP_synth_gamma_bact"/>
    <property type="match status" value="1"/>
</dbReference>
<dbReference type="InterPro" id="IPR035968">
    <property type="entry name" value="ATP_synth_F1_ATPase_gsu"/>
</dbReference>
<dbReference type="InterPro" id="IPR000131">
    <property type="entry name" value="ATP_synth_F1_gsu"/>
</dbReference>
<dbReference type="InterPro" id="IPR023632">
    <property type="entry name" value="ATP_synth_F1_gsu_CS"/>
</dbReference>
<dbReference type="NCBIfam" id="TIGR01146">
    <property type="entry name" value="ATPsyn_F1gamma"/>
    <property type="match status" value="1"/>
</dbReference>
<dbReference type="NCBIfam" id="NF004144">
    <property type="entry name" value="PRK05621.1-1"/>
    <property type="match status" value="1"/>
</dbReference>
<dbReference type="PANTHER" id="PTHR11693">
    <property type="entry name" value="ATP SYNTHASE GAMMA CHAIN"/>
    <property type="match status" value="1"/>
</dbReference>
<dbReference type="PANTHER" id="PTHR11693:SF22">
    <property type="entry name" value="ATP SYNTHASE SUBUNIT GAMMA, MITOCHONDRIAL"/>
    <property type="match status" value="1"/>
</dbReference>
<dbReference type="Pfam" id="PF00231">
    <property type="entry name" value="ATP-synt"/>
    <property type="match status" value="1"/>
</dbReference>
<dbReference type="PRINTS" id="PR00126">
    <property type="entry name" value="ATPASEGAMMA"/>
</dbReference>
<dbReference type="SUPFAM" id="SSF52943">
    <property type="entry name" value="ATP synthase (F1-ATPase), gamma subunit"/>
    <property type="match status" value="1"/>
</dbReference>
<dbReference type="PROSITE" id="PS00153">
    <property type="entry name" value="ATPASE_GAMMA"/>
    <property type="match status" value="1"/>
</dbReference>
<evidence type="ECO:0000255" key="1">
    <source>
        <dbReference type="HAMAP-Rule" id="MF_00815"/>
    </source>
</evidence>
<organism>
    <name type="scientific">Halorhodospira halophila (strain DSM 244 / SL1)</name>
    <name type="common">Ectothiorhodospira halophila (strain DSM 244 / SL1)</name>
    <dbReference type="NCBI Taxonomy" id="349124"/>
    <lineage>
        <taxon>Bacteria</taxon>
        <taxon>Pseudomonadati</taxon>
        <taxon>Pseudomonadota</taxon>
        <taxon>Gammaproteobacteria</taxon>
        <taxon>Chromatiales</taxon>
        <taxon>Ectothiorhodospiraceae</taxon>
        <taxon>Halorhodospira</taxon>
    </lineage>
</organism>
<proteinExistence type="inferred from homology"/>